<gene>
    <name evidence="1" type="primary">rpoA</name>
    <name type="ordered locus">BH0162</name>
</gene>
<proteinExistence type="inferred from homology"/>
<dbReference type="EC" id="2.7.7.6" evidence="1"/>
<dbReference type="EMBL" id="AB010082">
    <property type="protein sequence ID" value="BAA24194.1"/>
    <property type="molecule type" value="Genomic_DNA"/>
</dbReference>
<dbReference type="EMBL" id="AB017508">
    <property type="protein sequence ID" value="BAA75298.1"/>
    <property type="molecule type" value="Genomic_DNA"/>
</dbReference>
<dbReference type="EMBL" id="BA000004">
    <property type="protein sequence ID" value="BAB03881.1"/>
    <property type="molecule type" value="Genomic_DNA"/>
</dbReference>
<dbReference type="PIR" id="T44410">
    <property type="entry name" value="T44410"/>
</dbReference>
<dbReference type="RefSeq" id="WP_010896344.1">
    <property type="nucleotide sequence ID" value="NC_002570.2"/>
</dbReference>
<dbReference type="SMR" id="O50634"/>
<dbReference type="STRING" id="272558.gene:10726002"/>
<dbReference type="GeneID" id="87595703"/>
<dbReference type="KEGG" id="bha:BH0162"/>
<dbReference type="eggNOG" id="COG0202">
    <property type="taxonomic scope" value="Bacteria"/>
</dbReference>
<dbReference type="HOGENOM" id="CLU_053084_0_1_9"/>
<dbReference type="OrthoDB" id="9805706at2"/>
<dbReference type="Proteomes" id="UP000001258">
    <property type="component" value="Chromosome"/>
</dbReference>
<dbReference type="GO" id="GO:0005737">
    <property type="term" value="C:cytoplasm"/>
    <property type="evidence" value="ECO:0007669"/>
    <property type="project" value="UniProtKB-ARBA"/>
</dbReference>
<dbReference type="GO" id="GO:0000428">
    <property type="term" value="C:DNA-directed RNA polymerase complex"/>
    <property type="evidence" value="ECO:0007669"/>
    <property type="project" value="UniProtKB-KW"/>
</dbReference>
<dbReference type="GO" id="GO:0003677">
    <property type="term" value="F:DNA binding"/>
    <property type="evidence" value="ECO:0007669"/>
    <property type="project" value="UniProtKB-UniRule"/>
</dbReference>
<dbReference type="GO" id="GO:0003899">
    <property type="term" value="F:DNA-directed RNA polymerase activity"/>
    <property type="evidence" value="ECO:0007669"/>
    <property type="project" value="UniProtKB-UniRule"/>
</dbReference>
<dbReference type="GO" id="GO:0046983">
    <property type="term" value="F:protein dimerization activity"/>
    <property type="evidence" value="ECO:0007669"/>
    <property type="project" value="InterPro"/>
</dbReference>
<dbReference type="GO" id="GO:0006351">
    <property type="term" value="P:DNA-templated transcription"/>
    <property type="evidence" value="ECO:0007669"/>
    <property type="project" value="UniProtKB-UniRule"/>
</dbReference>
<dbReference type="CDD" id="cd06928">
    <property type="entry name" value="RNAP_alpha_NTD"/>
    <property type="match status" value="1"/>
</dbReference>
<dbReference type="FunFam" id="1.10.150.20:FF:000001">
    <property type="entry name" value="DNA-directed RNA polymerase subunit alpha"/>
    <property type="match status" value="1"/>
</dbReference>
<dbReference type="FunFam" id="2.170.120.12:FF:000001">
    <property type="entry name" value="DNA-directed RNA polymerase subunit alpha"/>
    <property type="match status" value="1"/>
</dbReference>
<dbReference type="Gene3D" id="1.10.150.20">
    <property type="entry name" value="5' to 3' exonuclease, C-terminal subdomain"/>
    <property type="match status" value="1"/>
</dbReference>
<dbReference type="Gene3D" id="2.170.120.12">
    <property type="entry name" value="DNA-directed RNA polymerase, insert domain"/>
    <property type="match status" value="1"/>
</dbReference>
<dbReference type="Gene3D" id="3.30.1360.10">
    <property type="entry name" value="RNA polymerase, RBP11-like subunit"/>
    <property type="match status" value="1"/>
</dbReference>
<dbReference type="HAMAP" id="MF_00059">
    <property type="entry name" value="RNApol_bact_RpoA"/>
    <property type="match status" value="1"/>
</dbReference>
<dbReference type="InterPro" id="IPR011262">
    <property type="entry name" value="DNA-dir_RNA_pol_insert"/>
</dbReference>
<dbReference type="InterPro" id="IPR011263">
    <property type="entry name" value="DNA-dir_RNA_pol_RpoA/D/Rpb3"/>
</dbReference>
<dbReference type="InterPro" id="IPR011773">
    <property type="entry name" value="DNA-dir_RpoA"/>
</dbReference>
<dbReference type="InterPro" id="IPR036603">
    <property type="entry name" value="RBP11-like"/>
</dbReference>
<dbReference type="InterPro" id="IPR011260">
    <property type="entry name" value="RNAP_asu_C"/>
</dbReference>
<dbReference type="InterPro" id="IPR036643">
    <property type="entry name" value="RNApol_insert_sf"/>
</dbReference>
<dbReference type="NCBIfam" id="NF003513">
    <property type="entry name" value="PRK05182.1-2"/>
    <property type="match status" value="1"/>
</dbReference>
<dbReference type="NCBIfam" id="NF003515">
    <property type="entry name" value="PRK05182.2-1"/>
    <property type="match status" value="1"/>
</dbReference>
<dbReference type="NCBIfam" id="NF003516">
    <property type="entry name" value="PRK05182.2-2"/>
    <property type="match status" value="1"/>
</dbReference>
<dbReference type="NCBIfam" id="NF003519">
    <property type="entry name" value="PRK05182.2-5"/>
    <property type="match status" value="1"/>
</dbReference>
<dbReference type="NCBIfam" id="TIGR02027">
    <property type="entry name" value="rpoA"/>
    <property type="match status" value="1"/>
</dbReference>
<dbReference type="Pfam" id="PF01000">
    <property type="entry name" value="RNA_pol_A_bac"/>
    <property type="match status" value="1"/>
</dbReference>
<dbReference type="Pfam" id="PF03118">
    <property type="entry name" value="RNA_pol_A_CTD"/>
    <property type="match status" value="1"/>
</dbReference>
<dbReference type="Pfam" id="PF01193">
    <property type="entry name" value="RNA_pol_L"/>
    <property type="match status" value="1"/>
</dbReference>
<dbReference type="SMART" id="SM00662">
    <property type="entry name" value="RPOLD"/>
    <property type="match status" value="1"/>
</dbReference>
<dbReference type="SUPFAM" id="SSF47789">
    <property type="entry name" value="C-terminal domain of RNA polymerase alpha subunit"/>
    <property type="match status" value="1"/>
</dbReference>
<dbReference type="SUPFAM" id="SSF56553">
    <property type="entry name" value="Insert subdomain of RNA polymerase alpha subunit"/>
    <property type="match status" value="1"/>
</dbReference>
<dbReference type="SUPFAM" id="SSF55257">
    <property type="entry name" value="RBP11-like subunits of RNA polymerase"/>
    <property type="match status" value="1"/>
</dbReference>
<accession>O50634</accession>
<accession>Q9JPW3</accession>
<reference key="1">
    <citation type="journal article" date="1998" name="FEMS Microbiol. Lett.">
        <title>Cloning and expression of the gene encoding RNA polymerase alpha subunit from alkaliphilic Bacillus sp. strain C-125.</title>
        <authorList>
            <person name="Nakasone K."/>
            <person name="Takaki Y."/>
            <person name="Takami H."/>
            <person name="Inoue A."/>
            <person name="Horikoshi K."/>
        </authorList>
    </citation>
    <scope>NUCLEOTIDE SEQUENCE [GENOMIC DNA]</scope>
    <source>
        <strain>ATCC BAA-125 / DSM 18197 / FERM 7344 / JCM 9153 / C-125</strain>
    </source>
</reference>
<reference key="2">
    <citation type="journal article" date="1999" name="Biosci. Biotechnol. Biochem.">
        <title>Sequence analysis of a 32-kb region including the major ribosomal protein gene clusters from alkaliphilic Bacillus sp. strain C-125.</title>
        <authorList>
            <person name="Takami H."/>
            <person name="Takaki Y."/>
            <person name="Nakasone K."/>
            <person name="Hirama C."/>
            <person name="Inoue A."/>
            <person name="Horikoshi K."/>
        </authorList>
    </citation>
    <scope>NUCLEOTIDE SEQUENCE [GENOMIC DNA]</scope>
    <source>
        <strain>ATCC BAA-125 / DSM 18197 / FERM 7344 / JCM 9153 / C-125</strain>
    </source>
</reference>
<reference key="3">
    <citation type="journal article" date="2000" name="Nucleic Acids Res.">
        <title>Complete genome sequence of the alkaliphilic bacterium Bacillus halodurans and genomic sequence comparison with Bacillus subtilis.</title>
        <authorList>
            <person name="Takami H."/>
            <person name="Nakasone K."/>
            <person name="Takaki Y."/>
            <person name="Maeno G."/>
            <person name="Sasaki R."/>
            <person name="Masui N."/>
            <person name="Fuji F."/>
            <person name="Hirama C."/>
            <person name="Nakamura Y."/>
            <person name="Ogasawara N."/>
            <person name="Kuhara S."/>
            <person name="Horikoshi K."/>
        </authorList>
    </citation>
    <scope>NUCLEOTIDE SEQUENCE [LARGE SCALE GENOMIC DNA]</scope>
    <source>
        <strain>ATCC BAA-125 / DSM 18197 / FERM 7344 / JCM 9153 / C-125</strain>
    </source>
</reference>
<feature type="chain" id="PRO_0000175262" description="DNA-directed RNA polymerase subunit alpha">
    <location>
        <begin position="1"/>
        <end position="314"/>
    </location>
</feature>
<feature type="region of interest" description="Alpha N-terminal domain (alpha-NTD)" evidence="1">
    <location>
        <begin position="1"/>
        <end position="228"/>
    </location>
</feature>
<feature type="region of interest" description="Alpha C-terminal domain (alpha-CTD)" evidence="1">
    <location>
        <begin position="245"/>
        <end position="314"/>
    </location>
</feature>
<organism>
    <name type="scientific">Halalkalibacterium halodurans (strain ATCC BAA-125 / DSM 18197 / FERM 7344 / JCM 9153 / C-125)</name>
    <name type="common">Bacillus halodurans</name>
    <dbReference type="NCBI Taxonomy" id="272558"/>
    <lineage>
        <taxon>Bacteria</taxon>
        <taxon>Bacillati</taxon>
        <taxon>Bacillota</taxon>
        <taxon>Bacilli</taxon>
        <taxon>Bacillales</taxon>
        <taxon>Bacillaceae</taxon>
        <taxon>Halalkalibacterium (ex Joshi et al. 2022)</taxon>
    </lineage>
</organism>
<evidence type="ECO:0000255" key="1">
    <source>
        <dbReference type="HAMAP-Rule" id="MF_00059"/>
    </source>
</evidence>
<sequence length="314" mass="34805">MIEIEKPVIETIEISEDAKYGKFVVEPLERGYGTTLGNSLRRILLSSLPGAAVTSVQIDGVLHEFSTIEGVVEDVTTIVLNLKQLALKIYSDEDKTLEIDTQGEGVVTAGDLTHDSDVDVLNPDLHIATLTTGAHLRMRITAKRGRGYVPAEGNKSDELAIGVIPIDSIYTPVSRVNYQVENTRVGQVTNYDKLTLDVWTDGSIRPEEAVSLGAKILTEHLNIFVGLTDQAQNAEIMVEKEEDQKEKVLEMTIEELDLSVRSYNCLKRAGINTVQELTQKTEEDMMKVRNLGRKSLEEVQEKLGELGLGLRKEE</sequence>
<name>RPOA_HALH5</name>
<keyword id="KW-0240">DNA-directed RNA polymerase</keyword>
<keyword id="KW-0548">Nucleotidyltransferase</keyword>
<keyword id="KW-1185">Reference proteome</keyword>
<keyword id="KW-0804">Transcription</keyword>
<keyword id="KW-0808">Transferase</keyword>
<comment type="function">
    <text evidence="1">DNA-dependent RNA polymerase catalyzes the transcription of DNA into RNA using the four ribonucleoside triphosphates as substrates.</text>
</comment>
<comment type="catalytic activity">
    <reaction evidence="1">
        <text>RNA(n) + a ribonucleoside 5'-triphosphate = RNA(n+1) + diphosphate</text>
        <dbReference type="Rhea" id="RHEA:21248"/>
        <dbReference type="Rhea" id="RHEA-COMP:14527"/>
        <dbReference type="Rhea" id="RHEA-COMP:17342"/>
        <dbReference type="ChEBI" id="CHEBI:33019"/>
        <dbReference type="ChEBI" id="CHEBI:61557"/>
        <dbReference type="ChEBI" id="CHEBI:140395"/>
        <dbReference type="EC" id="2.7.7.6"/>
    </reaction>
</comment>
<comment type="subunit">
    <text evidence="1">Homodimer. The RNAP catalytic core consists of 2 alpha, 1 beta, 1 beta' and 1 omega subunit. When a sigma factor is associated with the core the holoenzyme is formed, which can initiate transcription.</text>
</comment>
<comment type="domain">
    <text evidence="1">The N-terminal domain is essential for RNAP assembly and basal transcription, whereas the C-terminal domain is involved in interaction with transcriptional regulators and with upstream promoter elements.</text>
</comment>
<comment type="similarity">
    <text evidence="1">Belongs to the RNA polymerase alpha chain family.</text>
</comment>
<protein>
    <recommendedName>
        <fullName evidence="1">DNA-directed RNA polymerase subunit alpha</fullName>
        <shortName evidence="1">RNAP subunit alpha</shortName>
        <ecNumber evidence="1">2.7.7.6</ecNumber>
    </recommendedName>
    <alternativeName>
        <fullName evidence="1">RNA polymerase subunit alpha</fullName>
    </alternativeName>
    <alternativeName>
        <fullName evidence="1">Transcriptase subunit alpha</fullName>
    </alternativeName>
</protein>